<reference key="1">
    <citation type="journal article" date="2009" name="Nat. Biotechnol.">
        <title>Genome sequence of the recombinant protein production host Pichia pastoris.</title>
        <authorList>
            <person name="De Schutter K."/>
            <person name="Lin Y.-C."/>
            <person name="Tiels P."/>
            <person name="Van Hecke A."/>
            <person name="Glinka S."/>
            <person name="Weber-Lehmann J."/>
            <person name="Rouze P."/>
            <person name="Van de Peer Y."/>
            <person name="Callewaert N."/>
        </authorList>
    </citation>
    <scope>NUCLEOTIDE SEQUENCE [LARGE SCALE GENOMIC DNA]</scope>
    <source>
        <strain>GS115 / ATCC 20864</strain>
    </source>
</reference>
<dbReference type="EMBL" id="FN392322">
    <property type="protein sequence ID" value="CAY71817.1"/>
    <property type="molecule type" value="Genomic_DNA"/>
</dbReference>
<dbReference type="RefSeq" id="XP_002493996.1">
    <property type="nucleotide sequence ID" value="XM_002493951.1"/>
</dbReference>
<dbReference type="SMR" id="C4R892"/>
<dbReference type="FunCoup" id="C4R892">
    <property type="interactions" value="82"/>
</dbReference>
<dbReference type="STRING" id="644223.C4R892"/>
<dbReference type="EnsemblFungi" id="CAY71817">
    <property type="protein sequence ID" value="CAY71817"/>
    <property type="gene ID" value="PAS_chr4_0557"/>
</dbReference>
<dbReference type="GeneID" id="8200825"/>
<dbReference type="KEGG" id="ppa:PAS_chr4_0557"/>
<dbReference type="eggNOG" id="ENOG502QUUW">
    <property type="taxonomic scope" value="Eukaryota"/>
</dbReference>
<dbReference type="HOGENOM" id="CLU_032730_2_0_1"/>
<dbReference type="InParanoid" id="C4R892"/>
<dbReference type="OMA" id="WSFTQGL"/>
<dbReference type="OrthoDB" id="5599157at2759"/>
<dbReference type="Proteomes" id="UP000000314">
    <property type="component" value="Chromosome 4"/>
</dbReference>
<dbReference type="GO" id="GO:0005789">
    <property type="term" value="C:endoplasmic reticulum membrane"/>
    <property type="evidence" value="ECO:0007669"/>
    <property type="project" value="UniProtKB-SubCell"/>
</dbReference>
<dbReference type="GO" id="GO:0032865">
    <property type="term" value="C:ERMES complex"/>
    <property type="evidence" value="ECO:0007669"/>
    <property type="project" value="UniProtKB-UniRule"/>
</dbReference>
<dbReference type="GO" id="GO:0008289">
    <property type="term" value="F:lipid binding"/>
    <property type="evidence" value="ECO:0007669"/>
    <property type="project" value="UniProtKB-KW"/>
</dbReference>
<dbReference type="GO" id="GO:0000002">
    <property type="term" value="P:mitochondrial genome maintenance"/>
    <property type="evidence" value="ECO:0007669"/>
    <property type="project" value="UniProtKB-UniRule"/>
</dbReference>
<dbReference type="GO" id="GO:1990456">
    <property type="term" value="P:mitochondrion-endoplasmic reticulum membrane tethering"/>
    <property type="evidence" value="ECO:0007669"/>
    <property type="project" value="TreeGrafter"/>
</dbReference>
<dbReference type="GO" id="GO:0015914">
    <property type="term" value="P:phospholipid transport"/>
    <property type="evidence" value="ECO:0007669"/>
    <property type="project" value="TreeGrafter"/>
</dbReference>
<dbReference type="GO" id="GO:0045040">
    <property type="term" value="P:protein insertion into mitochondrial outer membrane"/>
    <property type="evidence" value="ECO:0007669"/>
    <property type="project" value="UniProtKB-UniRule"/>
</dbReference>
<dbReference type="CDD" id="cd21671">
    <property type="entry name" value="SMP_Mmm1"/>
    <property type="match status" value="1"/>
</dbReference>
<dbReference type="HAMAP" id="MF_03103">
    <property type="entry name" value="Mmm1"/>
    <property type="match status" value="1"/>
</dbReference>
<dbReference type="InterPro" id="IPR027537">
    <property type="entry name" value="Mmm1"/>
</dbReference>
<dbReference type="InterPro" id="IPR019411">
    <property type="entry name" value="MMM1_dom"/>
</dbReference>
<dbReference type="InterPro" id="IPR031468">
    <property type="entry name" value="SMP_LBD"/>
</dbReference>
<dbReference type="PANTHER" id="PTHR13466:SF0">
    <property type="entry name" value="SMP-LTD DOMAIN-CONTAINING PROTEIN"/>
    <property type="match status" value="1"/>
</dbReference>
<dbReference type="PANTHER" id="PTHR13466">
    <property type="entry name" value="TEX2 PROTEIN-RELATED"/>
    <property type="match status" value="1"/>
</dbReference>
<dbReference type="Pfam" id="PF10296">
    <property type="entry name" value="MMM1"/>
    <property type="match status" value="1"/>
</dbReference>
<dbReference type="PROSITE" id="PS51847">
    <property type="entry name" value="SMP"/>
    <property type="match status" value="1"/>
</dbReference>
<protein>
    <recommendedName>
        <fullName evidence="1">Maintenance of mitochondrial morphology protein 1</fullName>
    </recommendedName>
</protein>
<organism>
    <name type="scientific">Komagataella phaffii (strain GS115 / ATCC 20864)</name>
    <name type="common">Yeast</name>
    <name type="synonym">Pichia pastoris</name>
    <dbReference type="NCBI Taxonomy" id="644223"/>
    <lineage>
        <taxon>Eukaryota</taxon>
        <taxon>Fungi</taxon>
        <taxon>Dikarya</taxon>
        <taxon>Ascomycota</taxon>
        <taxon>Saccharomycotina</taxon>
        <taxon>Pichiomycetes</taxon>
        <taxon>Pichiales</taxon>
        <taxon>Pichiaceae</taxon>
        <taxon>Komagataella</taxon>
    </lineage>
</organism>
<sequence>MSMVIGIGDLLVGYYWQWRDESQVEGKFMFYRAAKKTTPVKYQYTSNLSRCFLVFGIEPKPNKSGNFNNTMPDTEHSGDTTVNQVETIVTTVVVEQQVPTLVALDSLINENLKLASASQSSGWGFAHGLLVGQLSVVAVLAFFIKFFIFGNSSMARPLMVAPLINRKPAGVYKKGRAKSFSEVEDYDSETSSTQILDKTYYDVKTHQSESLDWFNVLVAQSIAQFRYEALNNDNIYHSLSDALSSSNLPDYLDKITITEINIGDDFPIFSNCRIKHSPNNSNRLEAKIDVDVADTLTLGIETQLLLNQPKPFTAVLPVQLSVSIVRFSACLTVSLISTADEEFQSSIKCVEDSENAIGDYEDDDDEFGGGAALMFSFSPDFRLEFEVKSLIGARSKLENVPLIGNLIEEKLKSWFLERCVEPRFQLIELPSMWPRKKNTRKPVDSESETAVDSN</sequence>
<proteinExistence type="inferred from homology"/>
<feature type="chain" id="PRO_0000384247" description="Maintenance of mitochondrial morphology protein 1">
    <location>
        <begin position="1"/>
        <end position="454"/>
    </location>
</feature>
<feature type="topological domain" description="Lumenal" evidence="1">
    <location>
        <begin position="1"/>
        <end position="128"/>
    </location>
</feature>
<feature type="transmembrane region" description="Helical" evidence="1">
    <location>
        <begin position="129"/>
        <end position="149"/>
    </location>
</feature>
<feature type="topological domain" description="Cytoplasmic" evidence="1">
    <location>
        <begin position="150"/>
        <end position="454"/>
    </location>
</feature>
<feature type="domain" description="SMP-LTD" evidence="1">
    <location>
        <begin position="207"/>
        <end position="430"/>
    </location>
</feature>
<comment type="function">
    <text evidence="1">Component of the ERMES/MDM complex, which serves as a molecular tether to connect the endoplasmic reticulum (ER) and mitochondria. Components of this complex are involved in the control of mitochondrial shape and protein biogenesis, and function in nonvesicular lipid trafficking between the ER and mitochondria. The MDM12-MMM1 subcomplex functions in the major beta-barrel assembly pathway that is responsible for biogenesis of all outer membrane beta-barrel proteins, and acts in a late step after the SAM complex. The MDM10-MDM12-MMM1 subcomplex further acts in the TOM40-specific pathway after the action of the MDM12-MMM1 complex. Essential for establishing and maintaining the structure of mitochondria and maintenance of mtDNA nucleoids.</text>
</comment>
<comment type="subunit">
    <text evidence="1">Homodimer. Component of the ER-mitochondria encounter structure (ERMES) or MDM complex, composed of MMM1, MDM10, MDM12 and MDM34. A MMM1 homodimer associates with one molecule of MDM12 on each side in a pairwise head-to-tail manner, and the SMP-LTD domains of MMM1 and MDM12 generate a continuous hydrophobic tunnel for phospholipid trafficking.</text>
</comment>
<comment type="subcellular location">
    <subcellularLocation>
        <location evidence="1">Endoplasmic reticulum membrane</location>
        <topology evidence="1">Single-pass type I membrane protein</topology>
    </subcellularLocation>
    <text evidence="1">The ERMES/MDM complex localizes to a few discrete foci (around 10 per single cell), that represent mitochondria-endoplasmic reticulum junctions. These foci are often found next to mtDNA nucleoids.</text>
</comment>
<comment type="domain">
    <text evidence="1">The SMP-LTD domain is a barrel-like domain that can bind various types of glycerophospholipids in its interior and mediate their transfer between two adjacent bilayers.</text>
</comment>
<comment type="similarity">
    <text evidence="1">Belongs to the MMM1 family.</text>
</comment>
<name>MMM1_KOMPG</name>
<accession>C4R892</accession>
<keyword id="KW-0256">Endoplasmic reticulum</keyword>
<keyword id="KW-0445">Lipid transport</keyword>
<keyword id="KW-0446">Lipid-binding</keyword>
<keyword id="KW-0472">Membrane</keyword>
<keyword id="KW-1185">Reference proteome</keyword>
<keyword id="KW-0812">Transmembrane</keyword>
<keyword id="KW-1133">Transmembrane helix</keyword>
<keyword id="KW-0813">Transport</keyword>
<evidence type="ECO:0000255" key="1">
    <source>
        <dbReference type="HAMAP-Rule" id="MF_03103"/>
    </source>
</evidence>
<gene>
    <name evidence="1" type="primary">MMM1</name>
    <name type="ordered locus">PAS_chr4_0557</name>
</gene>